<reference key="1">
    <citation type="submission" date="2006-06" db="EMBL/GenBank/DDBJ databases">
        <title>Complete sequence of Rubrobacter xylanophilus DSM 9941.</title>
        <authorList>
            <consortium name="US DOE Joint Genome Institute"/>
            <person name="Copeland A."/>
            <person name="Lucas S."/>
            <person name="Lapidus A."/>
            <person name="Barry K."/>
            <person name="Detter J.C."/>
            <person name="Glavina del Rio T."/>
            <person name="Hammon N."/>
            <person name="Israni S."/>
            <person name="Dalin E."/>
            <person name="Tice H."/>
            <person name="Pitluck S."/>
            <person name="Munk A.C."/>
            <person name="Brettin T."/>
            <person name="Bruce D."/>
            <person name="Han C."/>
            <person name="Tapia R."/>
            <person name="Gilna P."/>
            <person name="Schmutz J."/>
            <person name="Larimer F."/>
            <person name="Land M."/>
            <person name="Hauser L."/>
            <person name="Kyrpides N."/>
            <person name="Lykidis A."/>
            <person name="da Costa M.S."/>
            <person name="Rainey F.A."/>
            <person name="Empadinhas N."/>
            <person name="Jolivet E."/>
            <person name="Battista J.R."/>
            <person name="Richardson P."/>
        </authorList>
    </citation>
    <scope>NUCLEOTIDE SEQUENCE [LARGE SCALE GENOMIC DNA]</scope>
    <source>
        <strain>DSM 9941 / JCM 11954 / NBRC 16129 / PRD-1</strain>
    </source>
</reference>
<protein>
    <recommendedName>
        <fullName evidence="1">Ribosomal RNA small subunit methyltransferase G</fullName>
        <ecNumber evidence="1">2.1.1.-</ecNumber>
    </recommendedName>
    <alternativeName>
        <fullName evidence="1">16S rRNA 7-methylguanosine methyltransferase</fullName>
        <shortName evidence="1">16S rRNA m7G methyltransferase</shortName>
    </alternativeName>
</protein>
<organism>
    <name type="scientific">Rubrobacter xylanophilus (strain DSM 9941 / JCM 11954 / NBRC 16129 / PRD-1)</name>
    <dbReference type="NCBI Taxonomy" id="266117"/>
    <lineage>
        <taxon>Bacteria</taxon>
        <taxon>Bacillati</taxon>
        <taxon>Actinomycetota</taxon>
        <taxon>Rubrobacteria</taxon>
        <taxon>Rubrobacterales</taxon>
        <taxon>Rubrobacteraceae</taxon>
        <taxon>Rubrobacter</taxon>
    </lineage>
</organism>
<accession>Q1AR63</accession>
<feature type="chain" id="PRO_0000335421" description="Ribosomal RNA small subunit methyltransferase G">
    <location>
        <begin position="1"/>
        <end position="261"/>
    </location>
</feature>
<feature type="binding site" evidence="1">
    <location>
        <position position="94"/>
    </location>
    <ligand>
        <name>S-adenosyl-L-methionine</name>
        <dbReference type="ChEBI" id="CHEBI:59789"/>
    </ligand>
</feature>
<feature type="binding site" evidence="1">
    <location>
        <position position="99"/>
    </location>
    <ligand>
        <name>S-adenosyl-L-methionine</name>
        <dbReference type="ChEBI" id="CHEBI:59789"/>
    </ligand>
</feature>
<feature type="binding site" evidence="1">
    <location>
        <begin position="117"/>
        <end position="119"/>
    </location>
    <ligand>
        <name>S-adenosyl-L-methionine</name>
        <dbReference type="ChEBI" id="CHEBI:59789"/>
    </ligand>
</feature>
<feature type="binding site" evidence="1">
    <location>
        <begin position="145"/>
        <end position="146"/>
    </location>
    <ligand>
        <name>S-adenosyl-L-methionine</name>
        <dbReference type="ChEBI" id="CHEBI:59789"/>
    </ligand>
</feature>
<feature type="binding site" evidence="1">
    <location>
        <position position="164"/>
    </location>
    <ligand>
        <name>S-adenosyl-L-methionine</name>
        <dbReference type="ChEBI" id="CHEBI:59789"/>
    </ligand>
</feature>
<gene>
    <name evidence="1" type="primary">rsmG</name>
    <name type="ordered locus">Rxyl_3211</name>
</gene>
<proteinExistence type="inferred from homology"/>
<dbReference type="EC" id="2.1.1.-" evidence="1"/>
<dbReference type="EMBL" id="CP000386">
    <property type="protein sequence ID" value="ABG06115.1"/>
    <property type="molecule type" value="Genomic_DNA"/>
</dbReference>
<dbReference type="RefSeq" id="WP_011566120.1">
    <property type="nucleotide sequence ID" value="NC_008148.1"/>
</dbReference>
<dbReference type="SMR" id="Q1AR63"/>
<dbReference type="STRING" id="266117.Rxyl_3211"/>
<dbReference type="KEGG" id="rxy:Rxyl_3211"/>
<dbReference type="eggNOG" id="COG0357">
    <property type="taxonomic scope" value="Bacteria"/>
</dbReference>
<dbReference type="HOGENOM" id="CLU_065341_0_0_11"/>
<dbReference type="OrthoDB" id="9808773at2"/>
<dbReference type="PhylomeDB" id="Q1AR63"/>
<dbReference type="Proteomes" id="UP000006637">
    <property type="component" value="Chromosome"/>
</dbReference>
<dbReference type="GO" id="GO:0005829">
    <property type="term" value="C:cytosol"/>
    <property type="evidence" value="ECO:0007669"/>
    <property type="project" value="TreeGrafter"/>
</dbReference>
<dbReference type="GO" id="GO:0070043">
    <property type="term" value="F:rRNA (guanine-N7-)-methyltransferase activity"/>
    <property type="evidence" value="ECO:0007669"/>
    <property type="project" value="UniProtKB-UniRule"/>
</dbReference>
<dbReference type="Gene3D" id="3.40.50.150">
    <property type="entry name" value="Vaccinia Virus protein VP39"/>
    <property type="match status" value="1"/>
</dbReference>
<dbReference type="HAMAP" id="MF_00074">
    <property type="entry name" value="16SrRNA_methyltr_G"/>
    <property type="match status" value="1"/>
</dbReference>
<dbReference type="InterPro" id="IPR003682">
    <property type="entry name" value="rRNA_ssu_MeTfrase_G"/>
</dbReference>
<dbReference type="InterPro" id="IPR029063">
    <property type="entry name" value="SAM-dependent_MTases_sf"/>
</dbReference>
<dbReference type="NCBIfam" id="TIGR00138">
    <property type="entry name" value="rsmG_gidB"/>
    <property type="match status" value="1"/>
</dbReference>
<dbReference type="PANTHER" id="PTHR31760">
    <property type="entry name" value="S-ADENOSYL-L-METHIONINE-DEPENDENT METHYLTRANSFERASES SUPERFAMILY PROTEIN"/>
    <property type="match status" value="1"/>
</dbReference>
<dbReference type="PANTHER" id="PTHR31760:SF0">
    <property type="entry name" value="S-ADENOSYL-L-METHIONINE-DEPENDENT METHYLTRANSFERASES SUPERFAMILY PROTEIN"/>
    <property type="match status" value="1"/>
</dbReference>
<dbReference type="Pfam" id="PF02527">
    <property type="entry name" value="GidB"/>
    <property type="match status" value="1"/>
</dbReference>
<dbReference type="SUPFAM" id="SSF53335">
    <property type="entry name" value="S-adenosyl-L-methionine-dependent methyltransferases"/>
    <property type="match status" value="1"/>
</dbReference>
<evidence type="ECO:0000255" key="1">
    <source>
        <dbReference type="HAMAP-Rule" id="MF_00074"/>
    </source>
</evidence>
<name>RSMG_RUBXD</name>
<keyword id="KW-0963">Cytoplasm</keyword>
<keyword id="KW-0489">Methyltransferase</keyword>
<keyword id="KW-1185">Reference proteome</keyword>
<keyword id="KW-0698">rRNA processing</keyword>
<keyword id="KW-0949">S-adenosyl-L-methionine</keyword>
<keyword id="KW-0808">Transferase</keyword>
<sequence>MSPGRSVSGGRRAFHVKRSAREAFRRQLDAWGVKASREQLSLLEEYALLLAGYRRANVIGTREPETVLLEHVLDSASCLLFEPLRAAGRVADVGSGGGLPGIPLKILLPEARVVLIESTGKKADFLRYAIESLGLSGVDVVNARVEAVAREAAHRSRYDAALARAVAALPVLAEYCVPLLRVGGHAVAMKGGMPEHELRLGEGAAAVLGARLSGVLEVPRLPEVGEEKRRRLVILEKRRETPGRYPRKAGVPAKRPLRGGG</sequence>
<comment type="function">
    <text evidence="1">Specifically methylates the N7 position of a guanine in 16S rRNA.</text>
</comment>
<comment type="subcellular location">
    <subcellularLocation>
        <location evidence="1">Cytoplasm</location>
    </subcellularLocation>
</comment>
<comment type="similarity">
    <text evidence="1">Belongs to the methyltransferase superfamily. RNA methyltransferase RsmG family.</text>
</comment>